<protein>
    <recommendedName>
        <fullName evidence="1">Translation initiation factor 2 subunit gamma</fullName>
        <ecNumber evidence="1">3.6.5.3</ecNumber>
    </recommendedName>
    <alternativeName>
        <fullName evidence="1">aIF2-gamma</fullName>
    </alternativeName>
    <alternativeName>
        <fullName evidence="1">eIF-2-gamma</fullName>
    </alternativeName>
</protein>
<comment type="function">
    <text evidence="1">eIF-2 functions in the early steps of protein synthesis by forming a ternary complex with GTP and initiator tRNA.</text>
</comment>
<comment type="catalytic activity">
    <reaction evidence="1">
        <text>GTP + H2O = GDP + phosphate + H(+)</text>
        <dbReference type="Rhea" id="RHEA:19669"/>
        <dbReference type="ChEBI" id="CHEBI:15377"/>
        <dbReference type="ChEBI" id="CHEBI:15378"/>
        <dbReference type="ChEBI" id="CHEBI:37565"/>
        <dbReference type="ChEBI" id="CHEBI:43474"/>
        <dbReference type="ChEBI" id="CHEBI:58189"/>
        <dbReference type="EC" id="3.6.5.3"/>
    </reaction>
</comment>
<comment type="cofactor">
    <cofactor evidence="1">
        <name>Mg(2+)</name>
        <dbReference type="ChEBI" id="CHEBI:18420"/>
    </cofactor>
</comment>
<comment type="subunit">
    <text evidence="1">Heterotrimer composed of an alpha, a beta and a gamma chain.</text>
</comment>
<comment type="similarity">
    <text evidence="1">Belongs to the TRAFAC class translation factor GTPase superfamily. Classic translation factor GTPase family. EIF2G subfamily.</text>
</comment>
<gene>
    <name evidence="1" type="primary">eif2g</name>
    <name type="ordered locus">OE_3876R</name>
</gene>
<dbReference type="EC" id="3.6.5.3" evidence="1"/>
<dbReference type="EMBL" id="AM774415">
    <property type="protein sequence ID" value="CAP14506.1"/>
    <property type="molecule type" value="Genomic_DNA"/>
</dbReference>
<dbReference type="RefSeq" id="WP_010903512.1">
    <property type="nucleotide sequence ID" value="NC_010364.1"/>
</dbReference>
<dbReference type="SMR" id="B0R6Y7"/>
<dbReference type="EnsemblBacteria" id="CAP14506">
    <property type="protein sequence ID" value="CAP14506"/>
    <property type="gene ID" value="OE_3876R"/>
</dbReference>
<dbReference type="KEGG" id="hsl:OE_3876R"/>
<dbReference type="HOGENOM" id="CLU_027154_0_1_2"/>
<dbReference type="PhylomeDB" id="B0R6Y7"/>
<dbReference type="Proteomes" id="UP000001321">
    <property type="component" value="Chromosome"/>
</dbReference>
<dbReference type="GO" id="GO:0005829">
    <property type="term" value="C:cytosol"/>
    <property type="evidence" value="ECO:0007669"/>
    <property type="project" value="TreeGrafter"/>
</dbReference>
<dbReference type="GO" id="GO:0005525">
    <property type="term" value="F:GTP binding"/>
    <property type="evidence" value="ECO:0007669"/>
    <property type="project" value="UniProtKB-UniRule"/>
</dbReference>
<dbReference type="GO" id="GO:0003924">
    <property type="term" value="F:GTPase activity"/>
    <property type="evidence" value="ECO:0007669"/>
    <property type="project" value="InterPro"/>
</dbReference>
<dbReference type="GO" id="GO:0046872">
    <property type="term" value="F:metal ion binding"/>
    <property type="evidence" value="ECO:0007669"/>
    <property type="project" value="UniProtKB-KW"/>
</dbReference>
<dbReference type="GO" id="GO:0003746">
    <property type="term" value="F:translation elongation factor activity"/>
    <property type="evidence" value="ECO:0007669"/>
    <property type="project" value="UniProtKB-UniRule"/>
</dbReference>
<dbReference type="GO" id="GO:0003743">
    <property type="term" value="F:translation initiation factor activity"/>
    <property type="evidence" value="ECO:0007669"/>
    <property type="project" value="UniProtKB-KW"/>
</dbReference>
<dbReference type="GO" id="GO:0000049">
    <property type="term" value="F:tRNA binding"/>
    <property type="evidence" value="ECO:0007669"/>
    <property type="project" value="TreeGrafter"/>
</dbReference>
<dbReference type="GO" id="GO:0001731">
    <property type="term" value="P:formation of translation preinitiation complex"/>
    <property type="evidence" value="ECO:0007669"/>
    <property type="project" value="TreeGrafter"/>
</dbReference>
<dbReference type="CDD" id="cd01888">
    <property type="entry name" value="eIF2_gamma"/>
    <property type="match status" value="1"/>
</dbReference>
<dbReference type="CDD" id="cd15490">
    <property type="entry name" value="eIF2_gamma_III"/>
    <property type="match status" value="1"/>
</dbReference>
<dbReference type="FunFam" id="3.40.50.300:FF:000065">
    <property type="entry name" value="Eukaryotic translation initiation factor 2 subunit gamma"/>
    <property type="match status" value="1"/>
</dbReference>
<dbReference type="FunFam" id="2.40.30.10:FF:000075">
    <property type="entry name" value="Translation initiation factor 2 subunit gamma"/>
    <property type="match status" value="1"/>
</dbReference>
<dbReference type="Gene3D" id="3.40.50.300">
    <property type="entry name" value="P-loop containing nucleotide triphosphate hydrolases"/>
    <property type="match status" value="1"/>
</dbReference>
<dbReference type="Gene3D" id="2.40.30.10">
    <property type="entry name" value="Translation factors"/>
    <property type="match status" value="2"/>
</dbReference>
<dbReference type="HAMAP" id="MF_00119">
    <property type="entry name" value="eIF_2_gamma"/>
    <property type="match status" value="1"/>
</dbReference>
<dbReference type="InterPro" id="IPR050543">
    <property type="entry name" value="eIF2G"/>
</dbReference>
<dbReference type="InterPro" id="IPR015256">
    <property type="entry name" value="eIF2g_C"/>
</dbReference>
<dbReference type="InterPro" id="IPR044128">
    <property type="entry name" value="eIF2g_GTP-bd"/>
</dbReference>
<dbReference type="InterPro" id="IPR027417">
    <property type="entry name" value="P-loop_NTPase"/>
</dbReference>
<dbReference type="InterPro" id="IPR005225">
    <property type="entry name" value="Small_GTP-bd"/>
</dbReference>
<dbReference type="InterPro" id="IPR000795">
    <property type="entry name" value="T_Tr_GTP-bd_dom"/>
</dbReference>
<dbReference type="InterPro" id="IPR022424">
    <property type="entry name" value="TIF2_gsu"/>
</dbReference>
<dbReference type="InterPro" id="IPR009000">
    <property type="entry name" value="Transl_B-barrel_sf"/>
</dbReference>
<dbReference type="InterPro" id="IPR009001">
    <property type="entry name" value="Transl_elong_EF1A/Init_IF2_C"/>
</dbReference>
<dbReference type="NCBIfam" id="TIGR03680">
    <property type="entry name" value="eif2g_arch"/>
    <property type="match status" value="1"/>
</dbReference>
<dbReference type="NCBIfam" id="NF003077">
    <property type="entry name" value="PRK04000.1"/>
    <property type="match status" value="1"/>
</dbReference>
<dbReference type="NCBIfam" id="TIGR00231">
    <property type="entry name" value="small_GTP"/>
    <property type="match status" value="1"/>
</dbReference>
<dbReference type="PANTHER" id="PTHR42854">
    <property type="entry name" value="EUKARYOTIC TRANSLATION INITIATION FACTOR 2 SUBUNIT 3 FAMILY MEMBER"/>
    <property type="match status" value="1"/>
</dbReference>
<dbReference type="PANTHER" id="PTHR42854:SF3">
    <property type="entry name" value="EUKARYOTIC TRANSLATION INITIATION FACTOR 2 SUBUNIT 3-RELATED"/>
    <property type="match status" value="1"/>
</dbReference>
<dbReference type="Pfam" id="PF09173">
    <property type="entry name" value="eIF2_C"/>
    <property type="match status" value="1"/>
</dbReference>
<dbReference type="Pfam" id="PF00009">
    <property type="entry name" value="GTP_EFTU"/>
    <property type="match status" value="1"/>
</dbReference>
<dbReference type="PRINTS" id="PR00315">
    <property type="entry name" value="ELONGATNFCT"/>
</dbReference>
<dbReference type="SUPFAM" id="SSF50465">
    <property type="entry name" value="EF-Tu/eEF-1alpha/eIF2-gamma C-terminal domain"/>
    <property type="match status" value="1"/>
</dbReference>
<dbReference type="SUPFAM" id="SSF52540">
    <property type="entry name" value="P-loop containing nucleoside triphosphate hydrolases"/>
    <property type="match status" value="1"/>
</dbReference>
<dbReference type="SUPFAM" id="SSF50447">
    <property type="entry name" value="Translation proteins"/>
    <property type="match status" value="1"/>
</dbReference>
<dbReference type="PROSITE" id="PS51722">
    <property type="entry name" value="G_TR_2"/>
    <property type="match status" value="1"/>
</dbReference>
<name>IF2G_HALS3</name>
<keyword id="KW-0342">GTP-binding</keyword>
<keyword id="KW-0378">Hydrolase</keyword>
<keyword id="KW-0396">Initiation factor</keyword>
<keyword id="KW-0460">Magnesium</keyword>
<keyword id="KW-0479">Metal-binding</keyword>
<keyword id="KW-0547">Nucleotide-binding</keyword>
<keyword id="KW-0648">Protein biosynthesis</keyword>
<reference key="1">
    <citation type="journal article" date="2008" name="Genomics">
        <title>Evolution in the laboratory: the genome of Halobacterium salinarum strain R1 compared to that of strain NRC-1.</title>
        <authorList>
            <person name="Pfeiffer F."/>
            <person name="Schuster S.C."/>
            <person name="Broicher A."/>
            <person name="Falb M."/>
            <person name="Palm P."/>
            <person name="Rodewald K."/>
            <person name="Ruepp A."/>
            <person name="Soppa J."/>
            <person name="Tittor J."/>
            <person name="Oesterhelt D."/>
        </authorList>
    </citation>
    <scope>NUCLEOTIDE SEQUENCE [LARGE SCALE GENOMIC DNA]</scope>
    <source>
        <strain>ATCC 29341 / DSM 671 / R1</strain>
    </source>
</reference>
<feature type="chain" id="PRO_1000095097" description="Translation initiation factor 2 subunit gamma">
    <location>
        <begin position="1"/>
        <end position="414"/>
    </location>
</feature>
<feature type="domain" description="tr-type G" evidence="1">
    <location>
        <begin position="7"/>
        <end position="204"/>
    </location>
</feature>
<feature type="region of interest" description="G1" evidence="1">
    <location>
        <begin position="16"/>
        <end position="23"/>
    </location>
</feature>
<feature type="region of interest" description="G2" evidence="1">
    <location>
        <begin position="44"/>
        <end position="48"/>
    </location>
</feature>
<feature type="region of interest" description="G3" evidence="1">
    <location>
        <begin position="91"/>
        <end position="94"/>
    </location>
</feature>
<feature type="region of interest" description="G4" evidence="1">
    <location>
        <begin position="147"/>
        <end position="150"/>
    </location>
</feature>
<feature type="region of interest" description="G5" evidence="1">
    <location>
        <begin position="182"/>
        <end position="184"/>
    </location>
</feature>
<feature type="binding site" evidence="1">
    <location>
        <begin position="19"/>
        <end position="24"/>
    </location>
    <ligand>
        <name>GTP</name>
        <dbReference type="ChEBI" id="CHEBI:37565"/>
    </ligand>
</feature>
<feature type="binding site" evidence="1">
    <location>
        <position position="19"/>
    </location>
    <ligand>
        <name>Mg(2+)</name>
        <dbReference type="ChEBI" id="CHEBI:18420"/>
        <label>2</label>
    </ligand>
</feature>
<feature type="binding site" evidence="1">
    <location>
        <position position="23"/>
    </location>
    <ligand>
        <name>Mg(2+)</name>
        <dbReference type="ChEBI" id="CHEBI:18420"/>
        <label>1</label>
    </ligand>
</feature>
<feature type="binding site" evidence="1">
    <location>
        <position position="44"/>
    </location>
    <ligand>
        <name>Mg(2+)</name>
        <dbReference type="ChEBI" id="CHEBI:18420"/>
        <label>2</label>
    </ligand>
</feature>
<feature type="binding site" evidence="1">
    <location>
        <position position="46"/>
    </location>
    <ligand>
        <name>Mg(2+)</name>
        <dbReference type="ChEBI" id="CHEBI:18420"/>
        <label>1</label>
    </ligand>
</feature>
<feature type="binding site" evidence="1">
    <location>
        <begin position="147"/>
        <end position="150"/>
    </location>
    <ligand>
        <name>GTP</name>
        <dbReference type="ChEBI" id="CHEBI:37565"/>
    </ligand>
</feature>
<feature type="binding site" evidence="1">
    <location>
        <begin position="182"/>
        <end position="184"/>
    </location>
    <ligand>
        <name>GTP</name>
        <dbReference type="ChEBI" id="CHEBI:37565"/>
    </ligand>
</feature>
<organism>
    <name type="scientific">Halobacterium salinarum (strain ATCC 29341 / DSM 671 / R1)</name>
    <dbReference type="NCBI Taxonomy" id="478009"/>
    <lineage>
        <taxon>Archaea</taxon>
        <taxon>Methanobacteriati</taxon>
        <taxon>Methanobacteriota</taxon>
        <taxon>Stenosarchaea group</taxon>
        <taxon>Halobacteria</taxon>
        <taxon>Halobacteriales</taxon>
        <taxon>Halobacteriaceae</taxon>
        <taxon>Halobacterium</taxon>
        <taxon>Halobacterium salinarum NRC-34001</taxon>
    </lineage>
</organism>
<proteinExistence type="inferred from homology"/>
<evidence type="ECO:0000255" key="1">
    <source>
        <dbReference type="HAMAP-Rule" id="MF_00119"/>
    </source>
</evidence>
<sequence length="414" mass="43781">MADEHRQPEVNIGLVGHVDHGKTTLVRALSGEWTDQHSEEMKRGISIRLGYADATLRRCPDCDEPECYTVAETCPEHDTATEIERTVSFVDAPGHETLMATMLSGAALMDGAVLVVGANEPVPQPQTEEHLMALDIIGIENIVIAQNKVDLVDAEEARQNYEEIQAFVEGTVAEDAPVVPVSAEQEINVDLVIDALQTEIATPDRDPSADPLLYAARSFDINRPGTEWGGLLGGVIGGSLVDGELEAGDELELRPGREVEEGGKTEWRPVTTDVRSLQAGGEDVDSASPGGLLGVGTGLDPSLTKGDALAGQVAGPPGSLPPTWESFEMDVDLLERLVGAADGEQIDDISTGEPLMLTVGTATTVGSVTSARDGECEVALKRPVCAPAGAKIAINRRVGARWRLIGVGTLTESE</sequence>
<accession>B0R6Y7</accession>